<reference key="1">
    <citation type="journal article" date="2002" name="DNA Res.">
        <title>Complete genome structure of the thermophilic cyanobacterium Thermosynechococcus elongatus BP-1.</title>
        <authorList>
            <person name="Nakamura Y."/>
            <person name="Kaneko T."/>
            <person name="Sato S."/>
            <person name="Ikeuchi M."/>
            <person name="Katoh H."/>
            <person name="Sasamoto S."/>
            <person name="Watanabe A."/>
            <person name="Iriguchi M."/>
            <person name="Kawashima K."/>
            <person name="Kimura T."/>
            <person name="Kishida Y."/>
            <person name="Kiyokawa C."/>
            <person name="Kohara M."/>
            <person name="Matsumoto M."/>
            <person name="Matsuno A."/>
            <person name="Nakazaki N."/>
            <person name="Shimpo S."/>
            <person name="Sugimoto M."/>
            <person name="Takeuchi C."/>
            <person name="Yamada M."/>
            <person name="Tabata S."/>
        </authorList>
    </citation>
    <scope>NUCLEOTIDE SEQUENCE [LARGE SCALE GENOMIC DNA]</scope>
    <source>
        <strain>NIES-2133 / IAM M-273 / BP-1</strain>
    </source>
</reference>
<dbReference type="EC" id="1.4.4.2" evidence="1"/>
<dbReference type="EMBL" id="BA000039">
    <property type="protein sequence ID" value="BAC09155.1"/>
    <property type="molecule type" value="Genomic_DNA"/>
</dbReference>
<dbReference type="RefSeq" id="NP_682393.1">
    <property type="nucleotide sequence ID" value="NC_004113.1"/>
</dbReference>
<dbReference type="SMR" id="Q8DII3"/>
<dbReference type="STRING" id="197221.gene:10748205"/>
<dbReference type="EnsemblBacteria" id="BAC09155">
    <property type="protein sequence ID" value="BAC09155"/>
    <property type="gene ID" value="BAC09155"/>
</dbReference>
<dbReference type="KEGG" id="tel:tll1603"/>
<dbReference type="PATRIC" id="fig|197221.4.peg.1682"/>
<dbReference type="eggNOG" id="COG0403">
    <property type="taxonomic scope" value="Bacteria"/>
</dbReference>
<dbReference type="eggNOG" id="COG1003">
    <property type="taxonomic scope" value="Bacteria"/>
</dbReference>
<dbReference type="Proteomes" id="UP000000440">
    <property type="component" value="Chromosome"/>
</dbReference>
<dbReference type="GO" id="GO:0005829">
    <property type="term" value="C:cytosol"/>
    <property type="evidence" value="ECO:0007669"/>
    <property type="project" value="TreeGrafter"/>
</dbReference>
<dbReference type="GO" id="GO:0005960">
    <property type="term" value="C:glycine cleavage complex"/>
    <property type="evidence" value="ECO:0007669"/>
    <property type="project" value="TreeGrafter"/>
</dbReference>
<dbReference type="GO" id="GO:0016594">
    <property type="term" value="F:glycine binding"/>
    <property type="evidence" value="ECO:0007669"/>
    <property type="project" value="TreeGrafter"/>
</dbReference>
<dbReference type="GO" id="GO:0004375">
    <property type="term" value="F:glycine dehydrogenase (decarboxylating) activity"/>
    <property type="evidence" value="ECO:0007669"/>
    <property type="project" value="UniProtKB-EC"/>
</dbReference>
<dbReference type="GO" id="GO:0030170">
    <property type="term" value="F:pyridoxal phosphate binding"/>
    <property type="evidence" value="ECO:0007669"/>
    <property type="project" value="TreeGrafter"/>
</dbReference>
<dbReference type="GO" id="GO:0019464">
    <property type="term" value="P:glycine decarboxylation via glycine cleavage system"/>
    <property type="evidence" value="ECO:0007669"/>
    <property type="project" value="UniProtKB-UniRule"/>
</dbReference>
<dbReference type="CDD" id="cd00613">
    <property type="entry name" value="GDC-P"/>
    <property type="match status" value="2"/>
</dbReference>
<dbReference type="FunFam" id="3.40.640.10:FF:000005">
    <property type="entry name" value="Glycine dehydrogenase (decarboxylating), mitochondrial"/>
    <property type="match status" value="1"/>
</dbReference>
<dbReference type="FunFam" id="3.90.1150.10:FF:000007">
    <property type="entry name" value="Glycine dehydrogenase (decarboxylating), mitochondrial"/>
    <property type="match status" value="1"/>
</dbReference>
<dbReference type="FunFam" id="3.40.640.10:FF:000007">
    <property type="entry name" value="glycine dehydrogenase (Decarboxylating), mitochondrial"/>
    <property type="match status" value="1"/>
</dbReference>
<dbReference type="Gene3D" id="3.90.1150.10">
    <property type="entry name" value="Aspartate Aminotransferase, domain 1"/>
    <property type="match status" value="2"/>
</dbReference>
<dbReference type="Gene3D" id="3.40.640.10">
    <property type="entry name" value="Type I PLP-dependent aspartate aminotransferase-like (Major domain)"/>
    <property type="match status" value="2"/>
</dbReference>
<dbReference type="HAMAP" id="MF_00711">
    <property type="entry name" value="GcvP"/>
    <property type="match status" value="1"/>
</dbReference>
<dbReference type="InterPro" id="IPR003437">
    <property type="entry name" value="GcvP"/>
</dbReference>
<dbReference type="InterPro" id="IPR049316">
    <property type="entry name" value="GDC-P_C"/>
</dbReference>
<dbReference type="InterPro" id="IPR049315">
    <property type="entry name" value="GDC-P_N"/>
</dbReference>
<dbReference type="InterPro" id="IPR020581">
    <property type="entry name" value="GDC_P"/>
</dbReference>
<dbReference type="InterPro" id="IPR015424">
    <property type="entry name" value="PyrdxlP-dep_Trfase"/>
</dbReference>
<dbReference type="InterPro" id="IPR015421">
    <property type="entry name" value="PyrdxlP-dep_Trfase_major"/>
</dbReference>
<dbReference type="InterPro" id="IPR015422">
    <property type="entry name" value="PyrdxlP-dep_Trfase_small"/>
</dbReference>
<dbReference type="NCBIfam" id="TIGR00461">
    <property type="entry name" value="gcvP"/>
    <property type="match status" value="1"/>
</dbReference>
<dbReference type="NCBIfam" id="NF003346">
    <property type="entry name" value="PRK04366.1"/>
    <property type="match status" value="1"/>
</dbReference>
<dbReference type="PANTHER" id="PTHR11773:SF1">
    <property type="entry name" value="GLYCINE DEHYDROGENASE (DECARBOXYLATING), MITOCHONDRIAL"/>
    <property type="match status" value="1"/>
</dbReference>
<dbReference type="PANTHER" id="PTHR11773">
    <property type="entry name" value="GLYCINE DEHYDROGENASE, DECARBOXYLATING"/>
    <property type="match status" value="1"/>
</dbReference>
<dbReference type="Pfam" id="PF21478">
    <property type="entry name" value="GcvP2_C"/>
    <property type="match status" value="1"/>
</dbReference>
<dbReference type="Pfam" id="PF02347">
    <property type="entry name" value="GDC-P"/>
    <property type="match status" value="2"/>
</dbReference>
<dbReference type="SUPFAM" id="SSF53383">
    <property type="entry name" value="PLP-dependent transferases"/>
    <property type="match status" value="2"/>
</dbReference>
<name>GCSP_THEVB</name>
<comment type="function">
    <text evidence="1">The glycine cleavage system catalyzes the degradation of glycine. The P protein binds the alpha-amino group of glycine through its pyridoxal phosphate cofactor; CO(2) is released and the remaining methylamine moiety is then transferred to the lipoamide cofactor of the H protein.</text>
</comment>
<comment type="catalytic activity">
    <reaction evidence="1">
        <text>N(6)-[(R)-lipoyl]-L-lysyl-[glycine-cleavage complex H protein] + glycine + H(+) = N(6)-[(R)-S(8)-aminomethyldihydrolipoyl]-L-lysyl-[glycine-cleavage complex H protein] + CO2</text>
        <dbReference type="Rhea" id="RHEA:24304"/>
        <dbReference type="Rhea" id="RHEA-COMP:10494"/>
        <dbReference type="Rhea" id="RHEA-COMP:10495"/>
        <dbReference type="ChEBI" id="CHEBI:15378"/>
        <dbReference type="ChEBI" id="CHEBI:16526"/>
        <dbReference type="ChEBI" id="CHEBI:57305"/>
        <dbReference type="ChEBI" id="CHEBI:83099"/>
        <dbReference type="ChEBI" id="CHEBI:83143"/>
        <dbReference type="EC" id="1.4.4.2"/>
    </reaction>
</comment>
<comment type="cofactor">
    <cofactor evidence="1">
        <name>pyridoxal 5'-phosphate</name>
        <dbReference type="ChEBI" id="CHEBI:597326"/>
    </cofactor>
</comment>
<comment type="subunit">
    <text evidence="1">The glycine cleavage system is composed of four proteins: P, T, L and H.</text>
</comment>
<comment type="similarity">
    <text evidence="1">Belongs to the GcvP family.</text>
</comment>
<protein>
    <recommendedName>
        <fullName evidence="1">Glycine dehydrogenase (decarboxylating)</fullName>
        <ecNumber evidence="1">1.4.4.2</ecNumber>
    </recommendedName>
    <alternativeName>
        <fullName evidence="1">Glycine cleavage system P-protein</fullName>
    </alternativeName>
    <alternativeName>
        <fullName evidence="1">Glycine decarboxylase</fullName>
    </alternativeName>
    <alternativeName>
        <fullName evidence="1">Glycine dehydrogenase (aminomethyl-transferring)</fullName>
    </alternativeName>
</protein>
<proteinExistence type="inferred from homology"/>
<organism>
    <name type="scientific">Thermosynechococcus vestitus (strain NIES-2133 / IAM M-273 / BP-1)</name>
    <dbReference type="NCBI Taxonomy" id="197221"/>
    <lineage>
        <taxon>Bacteria</taxon>
        <taxon>Bacillati</taxon>
        <taxon>Cyanobacteriota</taxon>
        <taxon>Cyanophyceae</taxon>
        <taxon>Acaryochloridales</taxon>
        <taxon>Thermosynechococcaceae</taxon>
        <taxon>Thermosynechococcus</taxon>
    </lineage>
</organism>
<sequence>MMVSSPPQLEINLETDAEFVARHIGITPSDLPKMLSLLGYGSLKELINAVIPPEIRLQRPLALSEGLSETAALQKLRTLAQQNQVWRSYIGMGYYNCITPSVIQRNILENPGWYTQYTPYQAEIAQGRLEALLNFQTLVSDLTGLAIANASLLDEATAAAEAMTLSFNACRQRGANRFLVAQDCHPQTLAVLRTRALPLGIQIVPIDPIAGELPWENAFGLLLQYPASDGAVRSPQALIAAAHERGLLVTVATDLLALTLLRPPGELGADIAVGSSQRFGVPLGYGGPHAAFFATREDFKRQLPGRLVGVSHDALGQRALRLALQTREQHIRREKATSNICTAQVLLAVVASMYAVYHGPDGLRQIAERIHQRTVRLAAGLEAAGYQLYYSEFFDTLRIGLGNLPVPVLKERAAAARINLRYFDDGSAGISLDETTTEKDVADLLALFGARPAEVEGGDRLPAALKRQSPYLQHPVFQDYHSEHALLRYIHRLQAKDLSLTTSMIPLGSCTMKLNATAEMLPISWPEFNQLHPFAPQEQAQGYQALFRELAAMLAEITGFDAISLQPNAGSQGEYAGLLVIRQYHHSRGESQRNVCLIPTSAHGTNPASAVMAGMQVVAVNCDAQGNIDVADLAAKAETYGDRLAALMITYPSTHGVFETGICQICDIIHRYGGQVYMDGANMNAQVGLCRPGDFGADVCHLNLHKTFCIPHGGGGPGVGPIGVKAHLAPFLPTTQVIPQGSETGPVTAAPWGSASILPISWMYITLMGGVGLTRATAIAILNANYIAKRLEPYYPVLYKGAHGLVAHECILDLRPLKKSAGIEVEDIAKRLMDYGFHAPTVSWPVPGTLMIEPTESETKAELDRFCEAMIAIRSEIAEIEAGVSDRQQNPLKNAPHPALMLATEPWPYPYSREVAAYPAPWLREYKFWPAVARIDNAYGDRHLVCTCSMPLTN</sequence>
<evidence type="ECO:0000255" key="1">
    <source>
        <dbReference type="HAMAP-Rule" id="MF_00711"/>
    </source>
</evidence>
<feature type="chain" id="PRO_0000166940" description="Glycine dehydrogenase (decarboxylating)">
    <location>
        <begin position="1"/>
        <end position="954"/>
    </location>
</feature>
<feature type="modified residue" description="N6-(pyridoxal phosphate)lysine" evidence="1">
    <location>
        <position position="706"/>
    </location>
</feature>
<accession>Q8DII3</accession>
<gene>
    <name evidence="1" type="primary">gcvP</name>
    <name type="ordered locus">tll1603</name>
</gene>
<keyword id="KW-0560">Oxidoreductase</keyword>
<keyword id="KW-0663">Pyridoxal phosphate</keyword>
<keyword id="KW-1185">Reference proteome</keyword>